<feature type="chain" id="PRO_1000097911" description="Elongation factor P--(R)-beta-lysine ligase">
    <location>
        <begin position="1"/>
        <end position="325"/>
    </location>
</feature>
<feature type="binding site" evidence="1">
    <location>
        <begin position="76"/>
        <end position="78"/>
    </location>
    <ligand>
        <name>substrate</name>
    </ligand>
</feature>
<feature type="binding site" evidence="1">
    <location>
        <begin position="100"/>
        <end position="102"/>
    </location>
    <ligand>
        <name>ATP</name>
        <dbReference type="ChEBI" id="CHEBI:30616"/>
    </ligand>
</feature>
<feature type="binding site" evidence="1">
    <location>
        <position position="109"/>
    </location>
    <ligand>
        <name>ATP</name>
        <dbReference type="ChEBI" id="CHEBI:30616"/>
    </ligand>
</feature>
<feature type="binding site" evidence="1">
    <location>
        <position position="118"/>
    </location>
    <ligand>
        <name>substrate</name>
    </ligand>
</feature>
<feature type="binding site" evidence="1">
    <location>
        <begin position="244"/>
        <end position="245"/>
    </location>
    <ligand>
        <name>ATP</name>
        <dbReference type="ChEBI" id="CHEBI:30616"/>
    </ligand>
</feature>
<feature type="binding site" evidence="1">
    <location>
        <position position="251"/>
    </location>
    <ligand>
        <name>substrate</name>
    </ligand>
</feature>
<feature type="binding site" evidence="1">
    <location>
        <position position="300"/>
    </location>
    <ligand>
        <name>ATP</name>
        <dbReference type="ChEBI" id="CHEBI:30616"/>
    </ligand>
</feature>
<proteinExistence type="inferred from homology"/>
<sequence length="325" mass="36874">MSETATWQPSASIPNLLKRAAIMAEIRRFFADRGVLEVETPCMSQATVTDIHLFPFETRFVGPGHSQGMNLYLMTSPEYHMKRLLAAGCGPVFQLCRSFRNEEMGRHHNPEFTMLEWYRPHYDMYRLMNEVDDLLQQVLDCQPAESLSYQQAFQRHLEIDPLSADKTQLREAAAKLDLSNIADTEEDRDTLLQLLFTMGVEPHIGKEKPTFIYHFPASQASLAQISTEDHRVAERFEVYYKGIELANGFHELTDAREQQQRFEQDNRKRAARGLPQQPIDQNLLDALAAGLPDCSGVALGVDRLVMLALGAESLADVIAFTVDRA</sequence>
<reference key="1">
    <citation type="journal article" date="2011" name="J. Bacteriol.">
        <title>Comparative genomics of 28 Salmonella enterica isolates: evidence for CRISPR-mediated adaptive sublineage evolution.</title>
        <authorList>
            <person name="Fricke W.F."/>
            <person name="Mammel M.K."/>
            <person name="McDermott P.F."/>
            <person name="Tartera C."/>
            <person name="White D.G."/>
            <person name="Leclerc J.E."/>
            <person name="Ravel J."/>
            <person name="Cebula T.A."/>
        </authorList>
    </citation>
    <scope>NUCLEOTIDE SEQUENCE [LARGE SCALE GENOMIC DNA]</scope>
    <source>
        <strain>CVM19633</strain>
    </source>
</reference>
<gene>
    <name evidence="1" type="primary">epmA</name>
    <name type="synonym">yjeA</name>
    <name type="ordered locus">SeSA_A4614</name>
</gene>
<protein>
    <recommendedName>
        <fullName evidence="1">Elongation factor P--(R)-beta-lysine ligase</fullName>
        <shortName evidence="1">EF-P--(R)-beta-lysine ligase</shortName>
        <ecNumber evidence="1">6.3.2.-</ecNumber>
    </recommendedName>
    <alternativeName>
        <fullName evidence="1">EF-P post-translational modification enzyme A</fullName>
    </alternativeName>
    <alternativeName>
        <fullName evidence="1">EF-P-lysine lysyltransferase</fullName>
    </alternativeName>
</protein>
<accession>B4TSD9</accession>
<evidence type="ECO:0000255" key="1">
    <source>
        <dbReference type="HAMAP-Rule" id="MF_00174"/>
    </source>
</evidence>
<comment type="function">
    <text evidence="1">With EpmB is involved in the beta-lysylation step of the post-translational modification of translation elongation factor P (EF-P) on 'Lys-34'. Catalyzes the ATP-dependent activation of (R)-beta-lysine produced by EpmB, forming a lysyl-adenylate, from which the beta-lysyl moiety is then transferred to the epsilon-amino group of EF-P 'Lys-34'.</text>
</comment>
<comment type="catalytic activity">
    <reaction evidence="1">
        <text>D-beta-lysine + L-lysyl-[protein] + ATP = N(6)-((3R)-3,6-diaminohexanoyl)-L-lysyl-[protein] + AMP + diphosphate + H(+)</text>
        <dbReference type="Rhea" id="RHEA:83435"/>
        <dbReference type="Rhea" id="RHEA-COMP:9752"/>
        <dbReference type="Rhea" id="RHEA-COMP:20131"/>
        <dbReference type="ChEBI" id="CHEBI:15378"/>
        <dbReference type="ChEBI" id="CHEBI:29969"/>
        <dbReference type="ChEBI" id="CHEBI:30616"/>
        <dbReference type="ChEBI" id="CHEBI:33019"/>
        <dbReference type="ChEBI" id="CHEBI:84138"/>
        <dbReference type="ChEBI" id="CHEBI:156053"/>
        <dbReference type="ChEBI" id="CHEBI:456215"/>
    </reaction>
    <physiologicalReaction direction="left-to-right" evidence="1">
        <dbReference type="Rhea" id="RHEA:83436"/>
    </physiologicalReaction>
</comment>
<comment type="subunit">
    <text evidence="1">Homodimer.</text>
</comment>
<comment type="similarity">
    <text evidence="1">Belongs to the class-II aminoacyl-tRNA synthetase family. EpmA subfamily.</text>
</comment>
<dbReference type="EC" id="6.3.2.-" evidence="1"/>
<dbReference type="EMBL" id="CP001127">
    <property type="protein sequence ID" value="ACF93050.1"/>
    <property type="molecule type" value="Genomic_DNA"/>
</dbReference>
<dbReference type="RefSeq" id="WP_000004797.1">
    <property type="nucleotide sequence ID" value="NC_011094.1"/>
</dbReference>
<dbReference type="SMR" id="B4TSD9"/>
<dbReference type="KEGG" id="sew:SeSA_A4614"/>
<dbReference type="HOGENOM" id="CLU_008255_1_1_6"/>
<dbReference type="Proteomes" id="UP000001865">
    <property type="component" value="Chromosome"/>
</dbReference>
<dbReference type="GO" id="GO:0005829">
    <property type="term" value="C:cytosol"/>
    <property type="evidence" value="ECO:0007669"/>
    <property type="project" value="TreeGrafter"/>
</dbReference>
<dbReference type="GO" id="GO:0016880">
    <property type="term" value="F:acid-ammonia (or amide) ligase activity"/>
    <property type="evidence" value="ECO:0007669"/>
    <property type="project" value="UniProtKB-UniRule"/>
</dbReference>
<dbReference type="GO" id="GO:0005524">
    <property type="term" value="F:ATP binding"/>
    <property type="evidence" value="ECO:0007669"/>
    <property type="project" value="UniProtKB-UniRule"/>
</dbReference>
<dbReference type="GO" id="GO:0004824">
    <property type="term" value="F:lysine-tRNA ligase activity"/>
    <property type="evidence" value="ECO:0007669"/>
    <property type="project" value="InterPro"/>
</dbReference>
<dbReference type="GO" id="GO:0000049">
    <property type="term" value="F:tRNA binding"/>
    <property type="evidence" value="ECO:0007669"/>
    <property type="project" value="TreeGrafter"/>
</dbReference>
<dbReference type="GO" id="GO:0006430">
    <property type="term" value="P:lysyl-tRNA aminoacylation"/>
    <property type="evidence" value="ECO:0007669"/>
    <property type="project" value="InterPro"/>
</dbReference>
<dbReference type="FunFam" id="3.30.930.10:FF:000017">
    <property type="entry name" value="Elongation factor P--(R)-beta-lysine ligase"/>
    <property type="match status" value="1"/>
</dbReference>
<dbReference type="Gene3D" id="3.30.930.10">
    <property type="entry name" value="Bira Bifunctional Protein, Domain 2"/>
    <property type="match status" value="1"/>
</dbReference>
<dbReference type="HAMAP" id="MF_00174">
    <property type="entry name" value="EF_P_modif_A"/>
    <property type="match status" value="1"/>
</dbReference>
<dbReference type="InterPro" id="IPR004364">
    <property type="entry name" value="Aa-tRNA-synt_II"/>
</dbReference>
<dbReference type="InterPro" id="IPR006195">
    <property type="entry name" value="aa-tRNA-synth_II"/>
</dbReference>
<dbReference type="InterPro" id="IPR045864">
    <property type="entry name" value="aa-tRNA-synth_II/BPL/LPL"/>
</dbReference>
<dbReference type="InterPro" id="IPR004525">
    <property type="entry name" value="EpmA"/>
</dbReference>
<dbReference type="InterPro" id="IPR018149">
    <property type="entry name" value="Lys-tRNA-synth_II_C"/>
</dbReference>
<dbReference type="NCBIfam" id="TIGR00462">
    <property type="entry name" value="genX"/>
    <property type="match status" value="1"/>
</dbReference>
<dbReference type="NCBIfam" id="NF006828">
    <property type="entry name" value="PRK09350.1"/>
    <property type="match status" value="1"/>
</dbReference>
<dbReference type="PANTHER" id="PTHR42918:SF6">
    <property type="entry name" value="ELONGATION FACTOR P--(R)-BETA-LYSINE LIGASE"/>
    <property type="match status" value="1"/>
</dbReference>
<dbReference type="PANTHER" id="PTHR42918">
    <property type="entry name" value="LYSYL-TRNA SYNTHETASE"/>
    <property type="match status" value="1"/>
</dbReference>
<dbReference type="Pfam" id="PF00152">
    <property type="entry name" value="tRNA-synt_2"/>
    <property type="match status" value="1"/>
</dbReference>
<dbReference type="PRINTS" id="PR00982">
    <property type="entry name" value="TRNASYNTHLYS"/>
</dbReference>
<dbReference type="SUPFAM" id="SSF55681">
    <property type="entry name" value="Class II aaRS and biotin synthetases"/>
    <property type="match status" value="1"/>
</dbReference>
<dbReference type="PROSITE" id="PS50862">
    <property type="entry name" value="AA_TRNA_LIGASE_II"/>
    <property type="match status" value="1"/>
</dbReference>
<organism>
    <name type="scientific">Salmonella schwarzengrund (strain CVM19633)</name>
    <dbReference type="NCBI Taxonomy" id="439843"/>
    <lineage>
        <taxon>Bacteria</taxon>
        <taxon>Pseudomonadati</taxon>
        <taxon>Pseudomonadota</taxon>
        <taxon>Gammaproteobacteria</taxon>
        <taxon>Enterobacterales</taxon>
        <taxon>Enterobacteriaceae</taxon>
        <taxon>Salmonella</taxon>
    </lineage>
</organism>
<name>EPMA_SALSV</name>
<keyword id="KW-0067">ATP-binding</keyword>
<keyword id="KW-0436">Ligase</keyword>
<keyword id="KW-0547">Nucleotide-binding</keyword>